<reference key="1">
    <citation type="journal article" date="2005" name="Nucleic Acids Res.">
        <title>The genome sequence of Salmonella enterica serovar Choleraesuis, a highly invasive and resistant zoonotic pathogen.</title>
        <authorList>
            <person name="Chiu C.-H."/>
            <person name="Tang P."/>
            <person name="Chu C."/>
            <person name="Hu S."/>
            <person name="Bao Q."/>
            <person name="Yu J."/>
            <person name="Chou Y.-Y."/>
            <person name="Wang H.-S."/>
            <person name="Lee Y.-S."/>
        </authorList>
    </citation>
    <scope>NUCLEOTIDE SEQUENCE [LARGE SCALE GENOMIC DNA]</scope>
    <source>
        <strain>SC-B67</strain>
    </source>
</reference>
<name>ACP_SALCH</name>
<sequence>MSTIEERVKKIIGEQLGVKQEEVTNNASFVEDLGADSLDTVELVMALEEEFDTEIPDEEAEKITTVQAAIDYINGHQA</sequence>
<dbReference type="EMBL" id="AE017220">
    <property type="protein sequence ID" value="AAX65050.1"/>
    <property type="molecule type" value="Genomic_DNA"/>
</dbReference>
<dbReference type="RefSeq" id="WP_000103754.1">
    <property type="nucleotide sequence ID" value="NC_006905.1"/>
</dbReference>
<dbReference type="SMR" id="Q57QG1"/>
<dbReference type="GeneID" id="98387866"/>
<dbReference type="KEGG" id="sec:SCH_1144"/>
<dbReference type="HOGENOM" id="CLU_108696_5_1_6"/>
<dbReference type="UniPathway" id="UPA00094"/>
<dbReference type="Proteomes" id="UP000000538">
    <property type="component" value="Chromosome"/>
</dbReference>
<dbReference type="GO" id="GO:0005829">
    <property type="term" value="C:cytosol"/>
    <property type="evidence" value="ECO:0007669"/>
    <property type="project" value="TreeGrafter"/>
</dbReference>
<dbReference type="GO" id="GO:0016020">
    <property type="term" value="C:membrane"/>
    <property type="evidence" value="ECO:0007669"/>
    <property type="project" value="GOC"/>
</dbReference>
<dbReference type="GO" id="GO:0000035">
    <property type="term" value="F:acyl binding"/>
    <property type="evidence" value="ECO:0007669"/>
    <property type="project" value="TreeGrafter"/>
</dbReference>
<dbReference type="GO" id="GO:0000036">
    <property type="term" value="F:acyl carrier activity"/>
    <property type="evidence" value="ECO:0007669"/>
    <property type="project" value="UniProtKB-UniRule"/>
</dbReference>
<dbReference type="GO" id="GO:0009245">
    <property type="term" value="P:lipid A biosynthetic process"/>
    <property type="evidence" value="ECO:0007669"/>
    <property type="project" value="TreeGrafter"/>
</dbReference>
<dbReference type="FunFam" id="1.10.1200.10:FF:000001">
    <property type="entry name" value="Acyl carrier protein"/>
    <property type="match status" value="1"/>
</dbReference>
<dbReference type="Gene3D" id="1.10.1200.10">
    <property type="entry name" value="ACP-like"/>
    <property type="match status" value="1"/>
</dbReference>
<dbReference type="HAMAP" id="MF_01217">
    <property type="entry name" value="Acyl_carrier"/>
    <property type="match status" value="1"/>
</dbReference>
<dbReference type="InterPro" id="IPR003231">
    <property type="entry name" value="ACP"/>
</dbReference>
<dbReference type="InterPro" id="IPR036736">
    <property type="entry name" value="ACP-like_sf"/>
</dbReference>
<dbReference type="InterPro" id="IPR009081">
    <property type="entry name" value="PP-bd_ACP"/>
</dbReference>
<dbReference type="InterPro" id="IPR006162">
    <property type="entry name" value="Ppantetheine_attach_site"/>
</dbReference>
<dbReference type="NCBIfam" id="TIGR00517">
    <property type="entry name" value="acyl_carrier"/>
    <property type="match status" value="1"/>
</dbReference>
<dbReference type="NCBIfam" id="NF002148">
    <property type="entry name" value="PRK00982.1-2"/>
    <property type="match status" value="1"/>
</dbReference>
<dbReference type="NCBIfam" id="NF002149">
    <property type="entry name" value="PRK00982.1-3"/>
    <property type="match status" value="1"/>
</dbReference>
<dbReference type="NCBIfam" id="NF002150">
    <property type="entry name" value="PRK00982.1-4"/>
    <property type="match status" value="1"/>
</dbReference>
<dbReference type="NCBIfam" id="NF002151">
    <property type="entry name" value="PRK00982.1-5"/>
    <property type="match status" value="1"/>
</dbReference>
<dbReference type="PANTHER" id="PTHR20863">
    <property type="entry name" value="ACYL CARRIER PROTEIN"/>
    <property type="match status" value="1"/>
</dbReference>
<dbReference type="PANTHER" id="PTHR20863:SF76">
    <property type="entry name" value="CARRIER DOMAIN-CONTAINING PROTEIN"/>
    <property type="match status" value="1"/>
</dbReference>
<dbReference type="Pfam" id="PF00550">
    <property type="entry name" value="PP-binding"/>
    <property type="match status" value="1"/>
</dbReference>
<dbReference type="SUPFAM" id="SSF47336">
    <property type="entry name" value="ACP-like"/>
    <property type="match status" value="1"/>
</dbReference>
<dbReference type="PROSITE" id="PS50075">
    <property type="entry name" value="CARRIER"/>
    <property type="match status" value="1"/>
</dbReference>
<dbReference type="PROSITE" id="PS00012">
    <property type="entry name" value="PHOSPHOPANTETHEINE"/>
    <property type="match status" value="1"/>
</dbReference>
<accession>Q57QG1</accession>
<organism>
    <name type="scientific">Salmonella choleraesuis (strain SC-B67)</name>
    <dbReference type="NCBI Taxonomy" id="321314"/>
    <lineage>
        <taxon>Bacteria</taxon>
        <taxon>Pseudomonadati</taxon>
        <taxon>Pseudomonadota</taxon>
        <taxon>Gammaproteobacteria</taxon>
        <taxon>Enterobacterales</taxon>
        <taxon>Enterobacteriaceae</taxon>
        <taxon>Salmonella</taxon>
    </lineage>
</organism>
<proteinExistence type="inferred from homology"/>
<evidence type="ECO:0000255" key="1">
    <source>
        <dbReference type="HAMAP-Rule" id="MF_01217"/>
    </source>
</evidence>
<evidence type="ECO:0000255" key="2">
    <source>
        <dbReference type="PROSITE-ProRule" id="PRU00258"/>
    </source>
</evidence>
<protein>
    <recommendedName>
        <fullName evidence="1">Acyl carrier protein</fullName>
        <shortName evidence="1">ACP</shortName>
    </recommendedName>
</protein>
<gene>
    <name evidence="1" type="primary">acpP</name>
    <name type="ordered locus">SCH_1144</name>
</gene>
<comment type="function">
    <text evidence="1">Carrier of the growing fatty acid chain in fatty acid biosynthesis.</text>
</comment>
<comment type="pathway">
    <text evidence="1">Lipid metabolism; fatty acid biosynthesis.</text>
</comment>
<comment type="subcellular location">
    <subcellularLocation>
        <location evidence="1">Cytoplasm</location>
    </subcellularLocation>
</comment>
<comment type="PTM">
    <text evidence="1">4'-phosphopantetheine is transferred from CoA to a specific serine of apo-ACP by AcpS. This modification is essential for activity because fatty acids are bound in thioester linkage to the sulfhydryl of the prosthetic group.</text>
</comment>
<comment type="similarity">
    <text evidence="1">Belongs to the acyl carrier protein (ACP) family.</text>
</comment>
<keyword id="KW-0963">Cytoplasm</keyword>
<keyword id="KW-0275">Fatty acid biosynthesis</keyword>
<keyword id="KW-0276">Fatty acid metabolism</keyword>
<keyword id="KW-0444">Lipid biosynthesis</keyword>
<keyword id="KW-0443">Lipid metabolism</keyword>
<keyword id="KW-0596">Phosphopantetheine</keyword>
<keyword id="KW-0597">Phosphoprotein</keyword>
<feature type="chain" id="PRO_1000066686" description="Acyl carrier protein">
    <location>
        <begin position="1"/>
        <end position="78"/>
    </location>
</feature>
<feature type="domain" description="Carrier" evidence="2">
    <location>
        <begin position="2"/>
        <end position="77"/>
    </location>
</feature>
<feature type="modified residue" description="O-(pantetheine 4'-phosphoryl)serine" evidence="2">
    <location>
        <position position="37"/>
    </location>
</feature>